<sequence length="554" mass="64034">MASSQVGDMVNGNAEPTRHLAKFPPSLWGDRFTSFTLDKQLSDKYGNEIEVLKEQVRSMVVAGGRKAVEQINLINVLERLGVSYHFEKEIEEQLEQLFAKFEDNEDYDLFTIALHFRIFRQHGYKMSCDVFNKFRDSNGEFKETVSNDVQGMLSLYEATYLKIRGEGFLDEAHAFTIAQLESLVGGPHLSSDLSEQVMHALKQSIHRGFPRLEAKHFISFYEKDASRNETLLRLAKLDFNQLQLSHREELCHIFRWWKELDLISKVPYARDRAVECFFWSTCAYYEPQHSVGRAVLTKIMLLLSVTDDTYDAYGTYDEVKLYTNAVQRWDVSAMDELPDYMKALYRALLNVYDEVERDLAKQGRAYGVHHSKEAFKEIVRSYEIEAEWFKEGYVVSFEEYMKNALVTSTGRLHTTSCFMGLEADVATTEAFEWILTKPKMVATSGAIGRLVDDVMSHDEEQERGHVATGLDCYMKQHGVSKQEAIVELYKMIENAWRDINEEMLKPTAISMKLLIRVLNLSRISDVVYKYVDGYTHPEIIKDHVISLFEDPIPM</sequence>
<gene>
    <name evidence="3" type="primary">TPS1G</name>
</gene>
<name>TPS1G_CAMHI</name>
<protein>
    <recommendedName>
        <fullName evidence="4">Valerianol synthase TPS1G</fullName>
        <ecNumber evidence="2">4.2.3.204</ecNumber>
    </recommendedName>
    <alternativeName>
        <fullName evidence="3">Terpene synthase 1g</fullName>
        <shortName evidence="3">ChTps1g</shortName>
    </alternativeName>
</protein>
<proteinExistence type="evidence at transcript level"/>
<feature type="chain" id="PRO_0000451724" description="Valerianol synthase TPS1G">
    <location>
        <begin position="1"/>
        <end position="554"/>
    </location>
</feature>
<feature type="short sequence motif" description="DDXXD motif" evidence="4">
    <location>
        <begin position="326"/>
        <end position="330"/>
    </location>
</feature>
<feature type="binding site" evidence="1">
    <location>
        <position position="307"/>
    </location>
    <ligand>
        <name>Mg(2+)</name>
        <dbReference type="ChEBI" id="CHEBI:18420"/>
        <label>1</label>
    </ligand>
</feature>
<feature type="binding site" evidence="1">
    <location>
        <position position="307"/>
    </location>
    <ligand>
        <name>Mg(2+)</name>
        <dbReference type="ChEBI" id="CHEBI:18420"/>
        <label>2</label>
    </ligand>
</feature>
<feature type="binding site" evidence="1">
    <location>
        <position position="311"/>
    </location>
    <ligand>
        <name>Mg(2+)</name>
        <dbReference type="ChEBI" id="CHEBI:18420"/>
        <label>1</label>
    </ligand>
</feature>
<feature type="binding site" evidence="1">
    <location>
        <position position="311"/>
    </location>
    <ligand>
        <name>Mg(2+)</name>
        <dbReference type="ChEBI" id="CHEBI:18420"/>
        <label>2</label>
    </ligand>
</feature>
<feature type="binding site" evidence="1">
    <location>
        <position position="452"/>
    </location>
    <ligand>
        <name>Mg(2+)</name>
        <dbReference type="ChEBI" id="CHEBI:18420"/>
        <label>3</label>
    </ligand>
</feature>
<feature type="binding site" evidence="1">
    <location>
        <position position="456"/>
    </location>
    <ligand>
        <name>Mg(2+)</name>
        <dbReference type="ChEBI" id="CHEBI:18420"/>
        <label>3</label>
    </ligand>
</feature>
<feature type="binding site" evidence="1">
    <location>
        <position position="460"/>
    </location>
    <ligand>
        <name>Mg(2+)</name>
        <dbReference type="ChEBI" id="CHEBI:18420"/>
        <label>3</label>
    </ligand>
</feature>
<accession>A0A348AUW1</accession>
<dbReference type="EC" id="4.2.3.204" evidence="2"/>
<dbReference type="EMBL" id="LC212982">
    <property type="protein sequence ID" value="BBC44642.1"/>
    <property type="molecule type" value="mRNA"/>
</dbReference>
<dbReference type="SMR" id="A0A348AUW1"/>
<dbReference type="UniPathway" id="UPA00213"/>
<dbReference type="GO" id="GO:0016838">
    <property type="term" value="F:carbon-oxygen lyase activity, acting on phosphates"/>
    <property type="evidence" value="ECO:0000314"/>
    <property type="project" value="UniProtKB"/>
</dbReference>
<dbReference type="GO" id="GO:0000287">
    <property type="term" value="F:magnesium ion binding"/>
    <property type="evidence" value="ECO:0007669"/>
    <property type="project" value="InterPro"/>
</dbReference>
<dbReference type="GO" id="GO:0010333">
    <property type="term" value="F:terpene synthase activity"/>
    <property type="evidence" value="ECO:0007669"/>
    <property type="project" value="InterPro"/>
</dbReference>
<dbReference type="GO" id="GO:0016102">
    <property type="term" value="P:diterpenoid biosynthetic process"/>
    <property type="evidence" value="ECO:0007669"/>
    <property type="project" value="InterPro"/>
</dbReference>
<dbReference type="GO" id="GO:0016106">
    <property type="term" value="P:sesquiterpenoid biosynthetic process"/>
    <property type="evidence" value="ECO:0000314"/>
    <property type="project" value="UniProtKB"/>
</dbReference>
<dbReference type="CDD" id="cd00684">
    <property type="entry name" value="Terpene_cyclase_plant_C1"/>
    <property type="match status" value="1"/>
</dbReference>
<dbReference type="FunFam" id="1.10.600.10:FF:000007">
    <property type="entry name" value="Isoprene synthase, chloroplastic"/>
    <property type="match status" value="1"/>
</dbReference>
<dbReference type="FunFam" id="1.50.10.130:FF:000001">
    <property type="entry name" value="Isoprene synthase, chloroplastic"/>
    <property type="match status" value="1"/>
</dbReference>
<dbReference type="Gene3D" id="1.10.600.10">
    <property type="entry name" value="Farnesyl Diphosphate Synthase"/>
    <property type="match status" value="1"/>
</dbReference>
<dbReference type="Gene3D" id="1.50.10.130">
    <property type="entry name" value="Terpene synthase, N-terminal domain"/>
    <property type="match status" value="1"/>
</dbReference>
<dbReference type="InterPro" id="IPR008949">
    <property type="entry name" value="Isoprenoid_synthase_dom_sf"/>
</dbReference>
<dbReference type="InterPro" id="IPR034741">
    <property type="entry name" value="Terpene_cyclase-like_1_C"/>
</dbReference>
<dbReference type="InterPro" id="IPR044814">
    <property type="entry name" value="Terpene_cyclase_plant_C1"/>
</dbReference>
<dbReference type="InterPro" id="IPR001906">
    <property type="entry name" value="Terpene_synth_N"/>
</dbReference>
<dbReference type="InterPro" id="IPR036965">
    <property type="entry name" value="Terpene_synth_N_sf"/>
</dbReference>
<dbReference type="InterPro" id="IPR050148">
    <property type="entry name" value="Terpene_synthase-like"/>
</dbReference>
<dbReference type="InterPro" id="IPR005630">
    <property type="entry name" value="Terpene_synthase_metal-bd"/>
</dbReference>
<dbReference type="InterPro" id="IPR008930">
    <property type="entry name" value="Terpenoid_cyclase/PrenylTrfase"/>
</dbReference>
<dbReference type="PANTHER" id="PTHR31225:SF93">
    <property type="entry name" value="ALPHA-HUMULENE_(-)-(E)-BETA-CARYOPHYLLENE SYNTHASE"/>
    <property type="match status" value="1"/>
</dbReference>
<dbReference type="PANTHER" id="PTHR31225">
    <property type="entry name" value="OS04G0344100 PROTEIN-RELATED"/>
    <property type="match status" value="1"/>
</dbReference>
<dbReference type="Pfam" id="PF01397">
    <property type="entry name" value="Terpene_synth"/>
    <property type="match status" value="1"/>
</dbReference>
<dbReference type="Pfam" id="PF03936">
    <property type="entry name" value="Terpene_synth_C"/>
    <property type="match status" value="1"/>
</dbReference>
<dbReference type="SFLD" id="SFLDS00005">
    <property type="entry name" value="Isoprenoid_Synthase_Type_I"/>
    <property type="match status" value="1"/>
</dbReference>
<dbReference type="SFLD" id="SFLDG01019">
    <property type="entry name" value="Terpene_Cyclase_Like_1_C_Termi"/>
    <property type="match status" value="1"/>
</dbReference>
<dbReference type="SUPFAM" id="SSF48239">
    <property type="entry name" value="Terpenoid cyclases/Protein prenyltransferases"/>
    <property type="match status" value="1"/>
</dbReference>
<dbReference type="SUPFAM" id="SSF48576">
    <property type="entry name" value="Terpenoid synthases"/>
    <property type="match status" value="1"/>
</dbReference>
<comment type="function">
    <text evidence="2">Terpene synthase that catalyzes the biosynthesis of the terpene valerianol, which is a volatile compound of floral scent.</text>
</comment>
<comment type="catalytic activity">
    <reaction evidence="2">
        <text>(2E,6E)-farnesyl diphosphate + H2O = valerianol + diphosphate</text>
        <dbReference type="Rhea" id="RHEA:60424"/>
        <dbReference type="ChEBI" id="CHEBI:15377"/>
        <dbReference type="ChEBI" id="CHEBI:33019"/>
        <dbReference type="ChEBI" id="CHEBI:143779"/>
        <dbReference type="ChEBI" id="CHEBI:175763"/>
        <dbReference type="EC" id="4.2.3.204"/>
    </reaction>
    <physiologicalReaction direction="left-to-right" evidence="2">
        <dbReference type="Rhea" id="RHEA:60425"/>
    </physiologicalReaction>
</comment>
<comment type="cofactor">
    <cofactor evidence="1">
        <name>Mg(2+)</name>
        <dbReference type="ChEBI" id="CHEBI:18420"/>
    </cofactor>
    <text evidence="1">Binds 3 Mg(2+) ions per subunit.</text>
</comment>
<comment type="pathway">
    <text evidence="4">Secondary metabolite biosynthesis; terpenoid biosynthesis.</text>
</comment>
<comment type="domain">
    <text evidence="4">The Asp-Asp-Xaa-Xaa-Asp/Glu (DDXXD/E) motif is important for the catalytic activity, presumably through binding to Mg(2+).</text>
</comment>
<comment type="similarity">
    <text evidence="4">Belongs to the terpene synthase family.</text>
</comment>
<reference key="1">
    <citation type="journal article" date="2018" name="Sci. Rep.">
        <title>Identification of novel sesquiterpene synthase genes that mediate the biosynthesis of valerianol, which was an unknown ingredient of tea.</title>
        <authorList>
            <person name="Hattan J."/>
            <person name="Shindo K."/>
            <person name="Sasaki T."/>
            <person name="Ohno F."/>
            <person name="Tokuda H."/>
            <person name="Ishikawa K."/>
            <person name="Misawa N."/>
        </authorList>
    </citation>
    <scope>NUCLEOTIDE SEQUENCE [MRNA]</scope>
</reference>
<keyword id="KW-0456">Lyase</keyword>
<keyword id="KW-0460">Magnesium</keyword>
<keyword id="KW-0479">Metal-binding</keyword>
<evidence type="ECO:0000250" key="1">
    <source>
        <dbReference type="UniProtKB" id="Q40577"/>
    </source>
</evidence>
<evidence type="ECO:0000269" key="2">
    <source>
    </source>
</evidence>
<evidence type="ECO:0000303" key="3">
    <source>
    </source>
</evidence>
<evidence type="ECO:0000305" key="4"/>
<organism>
    <name type="scientific">Camellia hiemalis</name>
    <name type="common">Camellia</name>
    <dbReference type="NCBI Taxonomy" id="1840584"/>
    <lineage>
        <taxon>Eukaryota</taxon>
        <taxon>Viridiplantae</taxon>
        <taxon>Streptophyta</taxon>
        <taxon>Embryophyta</taxon>
        <taxon>Tracheophyta</taxon>
        <taxon>Spermatophyta</taxon>
        <taxon>Magnoliopsida</taxon>
        <taxon>eudicotyledons</taxon>
        <taxon>Gunneridae</taxon>
        <taxon>Pentapetalae</taxon>
        <taxon>asterids</taxon>
        <taxon>Ericales</taxon>
        <taxon>Theaceae</taxon>
        <taxon>Camellia</taxon>
    </lineage>
</organism>